<dbReference type="EC" id="2.8.4.3" evidence="1"/>
<dbReference type="EMBL" id="AE017340">
    <property type="protein sequence ID" value="AAV81781.1"/>
    <property type="molecule type" value="Genomic_DNA"/>
</dbReference>
<dbReference type="RefSeq" id="WP_011234192.1">
    <property type="nucleotide sequence ID" value="NC_006512.1"/>
</dbReference>
<dbReference type="SMR" id="Q5QYC5"/>
<dbReference type="STRING" id="283942.IL0941"/>
<dbReference type="GeneID" id="41336101"/>
<dbReference type="KEGG" id="ilo:IL0941"/>
<dbReference type="eggNOG" id="COG0621">
    <property type="taxonomic scope" value="Bacteria"/>
</dbReference>
<dbReference type="HOGENOM" id="CLU_018697_2_0_6"/>
<dbReference type="OrthoDB" id="9805215at2"/>
<dbReference type="Proteomes" id="UP000001171">
    <property type="component" value="Chromosome"/>
</dbReference>
<dbReference type="GO" id="GO:0005829">
    <property type="term" value="C:cytosol"/>
    <property type="evidence" value="ECO:0007669"/>
    <property type="project" value="TreeGrafter"/>
</dbReference>
<dbReference type="GO" id="GO:0051539">
    <property type="term" value="F:4 iron, 4 sulfur cluster binding"/>
    <property type="evidence" value="ECO:0007669"/>
    <property type="project" value="UniProtKB-UniRule"/>
</dbReference>
<dbReference type="GO" id="GO:0046872">
    <property type="term" value="F:metal ion binding"/>
    <property type="evidence" value="ECO:0007669"/>
    <property type="project" value="UniProtKB-KW"/>
</dbReference>
<dbReference type="GO" id="GO:0035597">
    <property type="term" value="F:N6-isopentenyladenosine methylthiotransferase activity"/>
    <property type="evidence" value="ECO:0007669"/>
    <property type="project" value="TreeGrafter"/>
</dbReference>
<dbReference type="CDD" id="cd01335">
    <property type="entry name" value="Radical_SAM"/>
    <property type="match status" value="1"/>
</dbReference>
<dbReference type="FunFam" id="3.40.50.12160:FF:000001">
    <property type="entry name" value="tRNA-2-methylthio-N(6)-dimethylallyladenosine synthase"/>
    <property type="match status" value="1"/>
</dbReference>
<dbReference type="FunFam" id="3.80.30.20:FF:000001">
    <property type="entry name" value="tRNA-2-methylthio-N(6)-dimethylallyladenosine synthase 2"/>
    <property type="match status" value="1"/>
</dbReference>
<dbReference type="Gene3D" id="3.40.50.12160">
    <property type="entry name" value="Methylthiotransferase, N-terminal domain"/>
    <property type="match status" value="1"/>
</dbReference>
<dbReference type="Gene3D" id="3.80.30.20">
    <property type="entry name" value="tm_1862 like domain"/>
    <property type="match status" value="1"/>
</dbReference>
<dbReference type="HAMAP" id="MF_01864">
    <property type="entry name" value="tRNA_metthiotr_MiaB"/>
    <property type="match status" value="1"/>
</dbReference>
<dbReference type="InterPro" id="IPR006638">
    <property type="entry name" value="Elp3/MiaA/NifB-like_rSAM"/>
</dbReference>
<dbReference type="InterPro" id="IPR005839">
    <property type="entry name" value="Methylthiotransferase"/>
</dbReference>
<dbReference type="InterPro" id="IPR020612">
    <property type="entry name" value="Methylthiotransferase_CS"/>
</dbReference>
<dbReference type="InterPro" id="IPR013848">
    <property type="entry name" value="Methylthiotransferase_N"/>
</dbReference>
<dbReference type="InterPro" id="IPR038135">
    <property type="entry name" value="Methylthiotransferase_N_sf"/>
</dbReference>
<dbReference type="InterPro" id="IPR006463">
    <property type="entry name" value="MiaB_methiolase"/>
</dbReference>
<dbReference type="InterPro" id="IPR007197">
    <property type="entry name" value="rSAM"/>
</dbReference>
<dbReference type="InterPro" id="IPR023404">
    <property type="entry name" value="rSAM_horseshoe"/>
</dbReference>
<dbReference type="InterPro" id="IPR002792">
    <property type="entry name" value="TRAM_dom"/>
</dbReference>
<dbReference type="NCBIfam" id="TIGR01574">
    <property type="entry name" value="miaB-methiolase"/>
    <property type="match status" value="1"/>
</dbReference>
<dbReference type="NCBIfam" id="TIGR00089">
    <property type="entry name" value="MiaB/RimO family radical SAM methylthiotransferase"/>
    <property type="match status" value="1"/>
</dbReference>
<dbReference type="PANTHER" id="PTHR43020">
    <property type="entry name" value="CDK5 REGULATORY SUBUNIT-ASSOCIATED PROTEIN 1"/>
    <property type="match status" value="1"/>
</dbReference>
<dbReference type="PANTHER" id="PTHR43020:SF2">
    <property type="entry name" value="MITOCHONDRIAL TRNA METHYLTHIOTRANSFERASE CDK5RAP1"/>
    <property type="match status" value="1"/>
</dbReference>
<dbReference type="Pfam" id="PF04055">
    <property type="entry name" value="Radical_SAM"/>
    <property type="match status" value="1"/>
</dbReference>
<dbReference type="Pfam" id="PF01938">
    <property type="entry name" value="TRAM"/>
    <property type="match status" value="1"/>
</dbReference>
<dbReference type="Pfam" id="PF00919">
    <property type="entry name" value="UPF0004"/>
    <property type="match status" value="1"/>
</dbReference>
<dbReference type="SFLD" id="SFLDF00273">
    <property type="entry name" value="(dimethylallyl)adenosine_tRNA"/>
    <property type="match status" value="1"/>
</dbReference>
<dbReference type="SFLD" id="SFLDG01082">
    <property type="entry name" value="B12-binding_domain_containing"/>
    <property type="match status" value="1"/>
</dbReference>
<dbReference type="SFLD" id="SFLDS00029">
    <property type="entry name" value="Radical_SAM"/>
    <property type="match status" value="1"/>
</dbReference>
<dbReference type="SMART" id="SM00729">
    <property type="entry name" value="Elp3"/>
    <property type="match status" value="1"/>
</dbReference>
<dbReference type="SUPFAM" id="SSF102114">
    <property type="entry name" value="Radical SAM enzymes"/>
    <property type="match status" value="1"/>
</dbReference>
<dbReference type="PROSITE" id="PS51449">
    <property type="entry name" value="MTTASE_N"/>
    <property type="match status" value="1"/>
</dbReference>
<dbReference type="PROSITE" id="PS01278">
    <property type="entry name" value="MTTASE_RADICAL"/>
    <property type="match status" value="1"/>
</dbReference>
<dbReference type="PROSITE" id="PS51918">
    <property type="entry name" value="RADICAL_SAM"/>
    <property type="match status" value="1"/>
</dbReference>
<dbReference type="PROSITE" id="PS50926">
    <property type="entry name" value="TRAM"/>
    <property type="match status" value="1"/>
</dbReference>
<name>MIAB_IDILO</name>
<reference key="1">
    <citation type="journal article" date="2004" name="Proc. Natl. Acad. Sci. U.S.A.">
        <title>Genome sequence of the deep-sea gamma-proteobacterium Idiomarina loihiensis reveals amino acid fermentation as a source of carbon and energy.</title>
        <authorList>
            <person name="Hou S."/>
            <person name="Saw J.H."/>
            <person name="Lee K.S."/>
            <person name="Freitas T.A."/>
            <person name="Belisle C."/>
            <person name="Kawarabayasi Y."/>
            <person name="Donachie S.P."/>
            <person name="Pikina A."/>
            <person name="Galperin M.Y."/>
            <person name="Koonin E.V."/>
            <person name="Makarova K.S."/>
            <person name="Omelchenko M.V."/>
            <person name="Sorokin A."/>
            <person name="Wolf Y.I."/>
            <person name="Li Q.X."/>
            <person name="Keum Y.S."/>
            <person name="Campbell S."/>
            <person name="Denery J."/>
            <person name="Aizawa S."/>
            <person name="Shibata S."/>
            <person name="Malahoff A."/>
            <person name="Alam M."/>
        </authorList>
    </citation>
    <scope>NUCLEOTIDE SEQUENCE [LARGE SCALE GENOMIC DNA]</scope>
    <source>
        <strain>ATCC BAA-735 / DSM 15497 / L2-TR</strain>
    </source>
</reference>
<evidence type="ECO:0000255" key="1">
    <source>
        <dbReference type="HAMAP-Rule" id="MF_01864"/>
    </source>
</evidence>
<evidence type="ECO:0000255" key="2">
    <source>
        <dbReference type="PROSITE-ProRule" id="PRU01266"/>
    </source>
</evidence>
<organism>
    <name type="scientific">Idiomarina loihiensis (strain ATCC BAA-735 / DSM 15497 / L2-TR)</name>
    <dbReference type="NCBI Taxonomy" id="283942"/>
    <lineage>
        <taxon>Bacteria</taxon>
        <taxon>Pseudomonadati</taxon>
        <taxon>Pseudomonadota</taxon>
        <taxon>Gammaproteobacteria</taxon>
        <taxon>Alteromonadales</taxon>
        <taxon>Idiomarinaceae</taxon>
        <taxon>Idiomarina</taxon>
    </lineage>
</organism>
<keyword id="KW-0004">4Fe-4S</keyword>
<keyword id="KW-0963">Cytoplasm</keyword>
<keyword id="KW-0408">Iron</keyword>
<keyword id="KW-0411">Iron-sulfur</keyword>
<keyword id="KW-0479">Metal-binding</keyword>
<keyword id="KW-1185">Reference proteome</keyword>
<keyword id="KW-0949">S-adenosyl-L-methionine</keyword>
<keyword id="KW-0808">Transferase</keyword>
<keyword id="KW-0819">tRNA processing</keyword>
<sequence length="479" mass="53898">MSKKLYIKTWGCQMNEYDSTKMAELLHSTHGYDVAEEAEDADLILLNTCSIREKAQEKVFHQLGRWKNLKKNNPNLLIGVGGCVASQEGNEIRARAPFVDIIFGPQTLHRLPEMVNQVSETHAPMVDVSFPEIEKFDRLAEPKADGASAFVSIMEGCSKYCSFCVVPYTRGEEVSRPVDDVIYEIAQLAEQGVREVNLLGQNVNAYRGEHYDGEVCRFAELLHLVAAIDGIDRIRYTTSHPVEFTDDITEAYKTIPELVSHLHLPVQSGSDRILTMMKRGHTALEYKSKIRALKKARPDIAMSSDFIIGFPGESDADFEATMDLIQSIDFDMSFSFIYSARPGTPAADLPDDISEETKKKRLQLLQQRLNQQSMAHARRMLETEQRILVTGPSKKNPMELTGRTENNRVVNFVGQPHMIGQFVDVRITEVLPNSLRGELIREEADMGLRVDTAPEIILQRGKSSEPDELGVVRMPRQAS</sequence>
<proteinExistence type="inferred from homology"/>
<accession>Q5QYC5</accession>
<feature type="chain" id="PRO_0000374345" description="tRNA-2-methylthio-N(6)-dimethylallyladenosine synthase">
    <location>
        <begin position="1"/>
        <end position="479"/>
    </location>
</feature>
<feature type="domain" description="MTTase N-terminal" evidence="1">
    <location>
        <begin position="3"/>
        <end position="120"/>
    </location>
</feature>
<feature type="domain" description="Radical SAM core" evidence="2">
    <location>
        <begin position="143"/>
        <end position="375"/>
    </location>
</feature>
<feature type="domain" description="TRAM" evidence="1">
    <location>
        <begin position="378"/>
        <end position="441"/>
    </location>
</feature>
<feature type="binding site" evidence="1">
    <location>
        <position position="12"/>
    </location>
    <ligand>
        <name>[4Fe-4S] cluster</name>
        <dbReference type="ChEBI" id="CHEBI:49883"/>
        <label>1</label>
    </ligand>
</feature>
<feature type="binding site" evidence="1">
    <location>
        <position position="49"/>
    </location>
    <ligand>
        <name>[4Fe-4S] cluster</name>
        <dbReference type="ChEBI" id="CHEBI:49883"/>
        <label>1</label>
    </ligand>
</feature>
<feature type="binding site" evidence="1">
    <location>
        <position position="83"/>
    </location>
    <ligand>
        <name>[4Fe-4S] cluster</name>
        <dbReference type="ChEBI" id="CHEBI:49883"/>
        <label>1</label>
    </ligand>
</feature>
<feature type="binding site" evidence="1">
    <location>
        <position position="157"/>
    </location>
    <ligand>
        <name>[4Fe-4S] cluster</name>
        <dbReference type="ChEBI" id="CHEBI:49883"/>
        <label>2</label>
        <note>4Fe-4S-S-AdoMet</note>
    </ligand>
</feature>
<feature type="binding site" evidence="1">
    <location>
        <position position="161"/>
    </location>
    <ligand>
        <name>[4Fe-4S] cluster</name>
        <dbReference type="ChEBI" id="CHEBI:49883"/>
        <label>2</label>
        <note>4Fe-4S-S-AdoMet</note>
    </ligand>
</feature>
<feature type="binding site" evidence="1">
    <location>
        <position position="164"/>
    </location>
    <ligand>
        <name>[4Fe-4S] cluster</name>
        <dbReference type="ChEBI" id="CHEBI:49883"/>
        <label>2</label>
        <note>4Fe-4S-S-AdoMet</note>
    </ligand>
</feature>
<protein>
    <recommendedName>
        <fullName evidence="1">tRNA-2-methylthio-N(6)-dimethylallyladenosine synthase</fullName>
        <ecNumber evidence="1">2.8.4.3</ecNumber>
    </recommendedName>
    <alternativeName>
        <fullName evidence="1">(Dimethylallyl)adenosine tRNA methylthiotransferase MiaB</fullName>
    </alternativeName>
    <alternativeName>
        <fullName evidence="1">tRNA-i(6)A37 methylthiotransferase</fullName>
    </alternativeName>
</protein>
<gene>
    <name evidence="1" type="primary">miaB</name>
    <name type="ordered locus">IL0941</name>
</gene>
<comment type="function">
    <text evidence="1">Catalyzes the methylthiolation of N6-(dimethylallyl)adenosine (i(6)A), leading to the formation of 2-methylthio-N6-(dimethylallyl)adenosine (ms(2)i(6)A) at position 37 in tRNAs that read codons beginning with uridine.</text>
</comment>
<comment type="catalytic activity">
    <reaction evidence="1">
        <text>N(6)-dimethylallyladenosine(37) in tRNA + (sulfur carrier)-SH + AH2 + 2 S-adenosyl-L-methionine = 2-methylsulfanyl-N(6)-dimethylallyladenosine(37) in tRNA + (sulfur carrier)-H + 5'-deoxyadenosine + L-methionine + A + S-adenosyl-L-homocysteine + 2 H(+)</text>
        <dbReference type="Rhea" id="RHEA:37067"/>
        <dbReference type="Rhea" id="RHEA-COMP:10375"/>
        <dbReference type="Rhea" id="RHEA-COMP:10376"/>
        <dbReference type="Rhea" id="RHEA-COMP:14737"/>
        <dbReference type="Rhea" id="RHEA-COMP:14739"/>
        <dbReference type="ChEBI" id="CHEBI:13193"/>
        <dbReference type="ChEBI" id="CHEBI:15378"/>
        <dbReference type="ChEBI" id="CHEBI:17319"/>
        <dbReference type="ChEBI" id="CHEBI:17499"/>
        <dbReference type="ChEBI" id="CHEBI:29917"/>
        <dbReference type="ChEBI" id="CHEBI:57844"/>
        <dbReference type="ChEBI" id="CHEBI:57856"/>
        <dbReference type="ChEBI" id="CHEBI:59789"/>
        <dbReference type="ChEBI" id="CHEBI:64428"/>
        <dbReference type="ChEBI" id="CHEBI:74415"/>
        <dbReference type="ChEBI" id="CHEBI:74417"/>
        <dbReference type="EC" id="2.8.4.3"/>
    </reaction>
</comment>
<comment type="cofactor">
    <cofactor evidence="1">
        <name>[4Fe-4S] cluster</name>
        <dbReference type="ChEBI" id="CHEBI:49883"/>
    </cofactor>
    <text evidence="1">Binds 2 [4Fe-4S] clusters. One cluster is coordinated with 3 cysteines and an exchangeable S-adenosyl-L-methionine.</text>
</comment>
<comment type="subunit">
    <text evidence="1">Monomer.</text>
</comment>
<comment type="subcellular location">
    <subcellularLocation>
        <location evidence="1">Cytoplasm</location>
    </subcellularLocation>
</comment>
<comment type="similarity">
    <text evidence="1">Belongs to the methylthiotransferase family. MiaB subfamily.</text>
</comment>